<evidence type="ECO:0000255" key="1">
    <source>
        <dbReference type="PROSITE-ProRule" id="PRU00765"/>
    </source>
</evidence>
<evidence type="ECO:0000256" key="2">
    <source>
        <dbReference type="SAM" id="MobiDB-lite"/>
    </source>
</evidence>
<evidence type="ECO:0000269" key="3">
    <source>
    </source>
</evidence>
<evidence type="ECO:0000269" key="4">
    <source>
    </source>
</evidence>
<evidence type="ECO:0000269" key="5">
    <source>
    </source>
</evidence>
<evidence type="ECO:0000269" key="6">
    <source>
    </source>
</evidence>
<evidence type="ECO:0000269" key="7">
    <source>
    </source>
</evidence>
<evidence type="ECO:0000269" key="8">
    <source>
    </source>
</evidence>
<evidence type="ECO:0000269" key="9">
    <source>
    </source>
</evidence>
<evidence type="ECO:0000269" key="10">
    <source>
    </source>
</evidence>
<evidence type="ECO:0000269" key="11">
    <source>
    </source>
</evidence>
<evidence type="ECO:0000269" key="12">
    <source>
    </source>
</evidence>
<evidence type="ECO:0000269" key="13">
    <source>
    </source>
</evidence>
<evidence type="ECO:0000269" key="14">
    <source>
    </source>
</evidence>
<evidence type="ECO:0000269" key="15">
    <source>
    </source>
</evidence>
<evidence type="ECO:0000269" key="16">
    <source>
    </source>
</evidence>
<evidence type="ECO:0000269" key="17">
    <source>
    </source>
</evidence>
<evidence type="ECO:0000269" key="18">
    <source>
    </source>
</evidence>
<evidence type="ECO:0000305" key="19"/>
<evidence type="ECO:0007744" key="20">
    <source>
    </source>
</evidence>
<evidence type="ECO:0007829" key="21">
    <source>
        <dbReference type="PDB" id="2AIV"/>
    </source>
</evidence>
<evidence type="ECO:0007829" key="22">
    <source>
        <dbReference type="PDB" id="3PBP"/>
    </source>
</evidence>
<gene>
    <name type="primary">NUP116</name>
    <name type="synonym">NSP116</name>
    <name type="ordered locus">YMR047C</name>
    <name type="ORF">YM9532.12C</name>
</gene>
<feature type="chain" id="PRO_0000204835" description="Nucleoporin NUP116/NSP116">
    <location>
        <begin position="1"/>
        <end position="1113"/>
    </location>
</feature>
<feature type="repeat" description="FG 1">
    <location>
        <begin position="2"/>
        <end position="3"/>
    </location>
</feature>
<feature type="repeat" description="FG 2">
    <location>
        <begin position="17"/>
        <end position="18"/>
    </location>
</feature>
<feature type="repeat" description="FG 3">
    <location>
        <begin position="24"/>
        <end position="25"/>
    </location>
</feature>
<feature type="repeat" description="FG 4">
    <location>
        <begin position="40"/>
        <end position="41"/>
    </location>
</feature>
<feature type="repeat" description="GLFG 1; approximate">
    <location>
        <begin position="55"/>
        <end position="58"/>
    </location>
</feature>
<feature type="repeat" description="FG 5">
    <location>
        <begin position="66"/>
        <end position="67"/>
    </location>
</feature>
<feature type="repeat" description="FG 6">
    <location>
        <begin position="79"/>
        <end position="80"/>
    </location>
</feature>
<feature type="repeat" description="FG 7">
    <location>
        <begin position="94"/>
        <end position="95"/>
    </location>
</feature>
<feature type="repeat" description="FG 8">
    <location>
        <begin position="167"/>
        <end position="168"/>
    </location>
</feature>
<feature type="repeat" description="FG 9">
    <location>
        <begin position="189"/>
        <end position="190"/>
    </location>
</feature>
<feature type="repeat" description="GLFG 2">
    <location>
        <begin position="205"/>
        <end position="208"/>
    </location>
</feature>
<feature type="repeat" description="GLFG 3; approximate">
    <location>
        <begin position="214"/>
        <end position="217"/>
    </location>
</feature>
<feature type="repeat" description="GLFG 4; approximate">
    <location>
        <begin position="224"/>
        <end position="227"/>
    </location>
</feature>
<feature type="repeat" description="GLFG 5">
    <location>
        <begin position="235"/>
        <end position="238"/>
    </location>
</feature>
<feature type="repeat" description="FG 10">
    <location>
        <begin position="249"/>
        <end position="250"/>
    </location>
</feature>
<feature type="repeat" description="GLFG 6">
    <location>
        <begin position="259"/>
        <end position="262"/>
    </location>
</feature>
<feature type="repeat" description="GLFG 7">
    <location>
        <begin position="276"/>
        <end position="279"/>
    </location>
</feature>
<feature type="repeat" description="GLFG 8">
    <location>
        <begin position="288"/>
        <end position="291"/>
    </location>
</feature>
<feature type="repeat" description="FG 11">
    <location>
        <begin position="297"/>
        <end position="298"/>
    </location>
</feature>
<feature type="repeat" description="GLFG 9; approximate">
    <location>
        <begin position="306"/>
        <end position="309"/>
    </location>
</feature>
<feature type="repeat" description="GLFG 10; approximate">
    <location>
        <begin position="327"/>
        <end position="330"/>
    </location>
</feature>
<feature type="repeat" description="GLFG 11; approximate">
    <location>
        <begin position="339"/>
        <end position="342"/>
    </location>
</feature>
<feature type="repeat" description="FG 12">
    <location>
        <begin position="351"/>
        <end position="352"/>
    </location>
</feature>
<feature type="repeat" description="GLFG 12">
    <location>
        <begin position="359"/>
        <end position="362"/>
    </location>
</feature>
<feature type="repeat" description="FG 13">
    <location>
        <begin position="370"/>
        <end position="371"/>
    </location>
</feature>
<feature type="repeat" description="GLFG 13">
    <location>
        <begin position="382"/>
        <end position="385"/>
    </location>
</feature>
<feature type="repeat" description="GLFG 14">
    <location>
        <begin position="395"/>
        <end position="398"/>
    </location>
</feature>
<feature type="repeat" description="GLFG 15">
    <location>
        <begin position="407"/>
        <end position="410"/>
    </location>
</feature>
<feature type="repeat" description="GLFG 16">
    <location>
        <begin position="420"/>
        <end position="423"/>
    </location>
</feature>
<feature type="repeat" description="FG 14">
    <location>
        <begin position="431"/>
        <end position="432"/>
    </location>
</feature>
<feature type="repeat" description="GLFG 17">
    <location>
        <begin position="439"/>
        <end position="442"/>
    </location>
</feature>
<feature type="repeat" description="GLFG 18">
    <location>
        <begin position="448"/>
        <end position="451"/>
    </location>
</feature>
<feature type="repeat" description="FG 15">
    <location>
        <begin position="470"/>
        <end position="471"/>
    </location>
</feature>
<feature type="repeat" description="GLFG 19">
    <location>
        <begin position="482"/>
        <end position="485"/>
    </location>
</feature>
<feature type="repeat" description="GLFG 20">
    <location>
        <begin position="497"/>
        <end position="500"/>
    </location>
</feature>
<feature type="repeat" description="FG 16">
    <location>
        <begin position="510"/>
        <end position="511"/>
    </location>
</feature>
<feature type="repeat" description="FG 17">
    <location>
        <begin position="525"/>
        <end position="526"/>
    </location>
</feature>
<feature type="repeat" description="FG 18">
    <location>
        <begin position="532"/>
        <end position="533"/>
    </location>
</feature>
<feature type="repeat" description="GLFG 21">
    <location>
        <begin position="572"/>
        <end position="575"/>
    </location>
</feature>
<feature type="repeat" description="GLFG 22">
    <location>
        <begin position="585"/>
        <end position="588"/>
    </location>
</feature>
<feature type="repeat" description="GLFG 23">
    <location>
        <begin position="604"/>
        <end position="607"/>
    </location>
</feature>
<feature type="repeat" description="FG 19">
    <location>
        <begin position="616"/>
        <end position="617"/>
    </location>
</feature>
<feature type="repeat" description="GLFG 24; approximate">
    <location>
        <begin position="630"/>
        <end position="633"/>
    </location>
</feature>
<feature type="repeat" description="GLFG 25">
    <location>
        <begin position="648"/>
        <end position="651"/>
    </location>
</feature>
<feature type="repeat" description="GLFG 26">
    <location>
        <begin position="665"/>
        <end position="668"/>
    </location>
</feature>
<feature type="repeat" description="GLFG 27">
    <location>
        <begin position="683"/>
        <end position="686"/>
    </location>
</feature>
<feature type="domain" description="Peptidase S59" evidence="1">
    <location>
        <begin position="967"/>
        <end position="1109"/>
    </location>
</feature>
<feature type="region of interest" description="Disordered" evidence="2">
    <location>
        <begin position="1"/>
        <end position="35"/>
    </location>
</feature>
<feature type="region of interest" description="Disordered" evidence="2">
    <location>
        <begin position="49"/>
        <end position="91"/>
    </location>
</feature>
<feature type="region of interest" description="Interaction with AFG2" evidence="14">
    <location>
        <begin position="92"/>
        <end position="172"/>
    </location>
</feature>
<feature type="region of interest" description="GLE2 binding sequence (GLEBS)">
    <location>
        <begin position="110"/>
        <end position="166"/>
    </location>
</feature>
<feature type="region of interest" description="Interaction with MEX67, not KAP95" evidence="7">
    <location>
        <begin position="160"/>
        <end position="362"/>
    </location>
</feature>
<feature type="region of interest" description="Disordered" evidence="2">
    <location>
        <begin position="265"/>
        <end position="341"/>
    </location>
</feature>
<feature type="region of interest" description="Sufficient for interaction with MEX67 and KAP95" evidence="7">
    <location>
        <begin position="362"/>
        <end position="535"/>
    </location>
</feature>
<feature type="region of interest" description="Disordered" evidence="2">
    <location>
        <begin position="371"/>
        <end position="606"/>
    </location>
</feature>
<feature type="region of interest" description="Interaction with KAP95, not MEX67">
    <location>
        <begin position="536"/>
        <end position="732"/>
    </location>
</feature>
<feature type="region of interest" description="Disordered" evidence="2">
    <location>
        <begin position="678"/>
        <end position="736"/>
    </location>
</feature>
<feature type="region of interest" description="Disordered" evidence="2">
    <location>
        <begin position="868"/>
        <end position="939"/>
    </location>
</feature>
<feature type="region of interest" description="Interaction with NUP82 NPC subcomplex">
    <location>
        <begin position="967"/>
        <end position="1113"/>
    </location>
</feature>
<feature type="region of interest" description="Nucleoporin RNA-binding motif (NRM)">
    <location>
        <begin position="969"/>
        <end position="1108"/>
    </location>
</feature>
<feature type="compositionally biased region" description="Low complexity" evidence="2">
    <location>
        <begin position="13"/>
        <end position="33"/>
    </location>
</feature>
<feature type="compositionally biased region" description="Low complexity" evidence="2">
    <location>
        <begin position="265"/>
        <end position="279"/>
    </location>
</feature>
<feature type="compositionally biased region" description="Polar residues" evidence="2">
    <location>
        <begin position="280"/>
        <end position="304"/>
    </location>
</feature>
<feature type="compositionally biased region" description="Low complexity" evidence="2">
    <location>
        <begin position="330"/>
        <end position="341"/>
    </location>
</feature>
<feature type="compositionally biased region" description="Low complexity" evidence="2">
    <location>
        <begin position="410"/>
        <end position="438"/>
    </location>
</feature>
<feature type="compositionally biased region" description="Polar residues" evidence="2">
    <location>
        <begin position="451"/>
        <end position="464"/>
    </location>
</feature>
<feature type="compositionally biased region" description="Low complexity" evidence="2">
    <location>
        <begin position="465"/>
        <end position="478"/>
    </location>
</feature>
<feature type="compositionally biased region" description="Low complexity" evidence="2">
    <location>
        <begin position="485"/>
        <end position="522"/>
    </location>
</feature>
<feature type="compositionally biased region" description="Polar residues" evidence="2">
    <location>
        <begin position="532"/>
        <end position="569"/>
    </location>
</feature>
<feature type="compositionally biased region" description="Polar residues" evidence="2">
    <location>
        <begin position="588"/>
        <end position="603"/>
    </location>
</feature>
<feature type="compositionally biased region" description="Low complexity" evidence="2">
    <location>
        <begin position="678"/>
        <end position="691"/>
    </location>
</feature>
<feature type="compositionally biased region" description="Polar residues" evidence="2">
    <location>
        <begin position="692"/>
        <end position="708"/>
    </location>
</feature>
<feature type="compositionally biased region" description="Low complexity" evidence="2">
    <location>
        <begin position="719"/>
        <end position="736"/>
    </location>
</feature>
<feature type="compositionally biased region" description="Basic and acidic residues" evidence="2">
    <location>
        <begin position="916"/>
        <end position="939"/>
    </location>
</feature>
<feature type="modified residue" description="Phosphoserine" evidence="20">
    <location>
        <position position="886"/>
    </location>
</feature>
<feature type="mutagenesis site" description="Loss of interaction with AFG2." evidence="14">
    <location>
        <begin position="92"/>
        <end position="1113"/>
    </location>
</feature>
<feature type="mutagenesis site" description="Prevents the release of AFG2, RLP24 and NOG1 from pre-60S ribosomal particles. Enhances growth defect in an AFG2 (drg1-18) mutant background." evidence="14">
    <location>
        <begin position="110"/>
        <end position="166"/>
    </location>
</feature>
<feature type="mutagenesis site" description="No effect on the interaction with AFG2." evidence="14">
    <location>
        <begin position="173"/>
        <end position="1113"/>
    </location>
</feature>
<feature type="sequence conflict" description="In Ref. 1; CAA78754." evidence="19" ref="1">
    <original>G</original>
    <variation>A</variation>
    <location>
        <position position="26"/>
    </location>
</feature>
<feature type="sequence conflict" description="In Ref. 1; CAA78754." evidence="19" ref="1">
    <original>S</original>
    <variation>G</variation>
    <location>
        <position position="536"/>
    </location>
</feature>
<feature type="sequence conflict" description="In Ref. 1; CAA78754." evidence="19" ref="1">
    <original>S</original>
    <variation>P</variation>
    <location>
        <position position="720"/>
    </location>
</feature>
<feature type="sequence conflict" description="In Ref. 1; CAA78754." evidence="19" ref="1">
    <original>S</original>
    <variation>Y</variation>
    <location>
        <position position="1018"/>
    </location>
</feature>
<feature type="sequence conflict" description="In Ref. 1; CAA78754." evidence="19" ref="1">
    <original>I</original>
    <variation>Y</variation>
    <location>
        <position position="1023"/>
    </location>
</feature>
<feature type="strand" evidence="22">
    <location>
        <begin position="970"/>
        <end position="974"/>
    </location>
</feature>
<feature type="helix" evidence="22">
    <location>
        <begin position="976"/>
        <end position="981"/>
    </location>
</feature>
<feature type="strand" evidence="22">
    <location>
        <begin position="988"/>
        <end position="990"/>
    </location>
</feature>
<feature type="strand" evidence="22">
    <location>
        <begin position="994"/>
        <end position="997"/>
    </location>
</feature>
<feature type="turn" evidence="22">
    <location>
        <begin position="998"/>
        <end position="1000"/>
    </location>
</feature>
<feature type="strand" evidence="22">
    <location>
        <begin position="1001"/>
        <end position="1007"/>
    </location>
</feature>
<feature type="turn" evidence="22">
    <location>
        <begin position="1019"/>
        <end position="1022"/>
    </location>
</feature>
<feature type="strand" evidence="22">
    <location>
        <begin position="1023"/>
        <end position="1027"/>
    </location>
</feature>
<feature type="strand" evidence="22">
    <location>
        <begin position="1030"/>
        <end position="1034"/>
    </location>
</feature>
<feature type="strand" evidence="21">
    <location>
        <begin position="1042"/>
        <end position="1044"/>
    </location>
</feature>
<feature type="strand" evidence="22">
    <location>
        <begin position="1051"/>
        <end position="1056"/>
    </location>
</feature>
<feature type="turn" evidence="22">
    <location>
        <begin position="1063"/>
        <end position="1065"/>
    </location>
</feature>
<feature type="helix" evidence="22">
    <location>
        <begin position="1075"/>
        <end position="1084"/>
    </location>
</feature>
<feature type="strand" evidence="22">
    <location>
        <begin position="1088"/>
        <end position="1095"/>
    </location>
</feature>
<feature type="turn" evidence="22">
    <location>
        <begin position="1097"/>
        <end position="1099"/>
    </location>
</feature>
<feature type="strand" evidence="22">
    <location>
        <begin position="1102"/>
        <end position="1107"/>
    </location>
</feature>
<dbReference type="EMBL" id="Z15036">
    <property type="protein sequence ID" value="CAA78754.1"/>
    <property type="molecule type" value="Genomic_DNA"/>
</dbReference>
<dbReference type="EMBL" id="X68108">
    <property type="protein sequence ID" value="CAA48228.1"/>
    <property type="molecule type" value="Genomic_DNA"/>
</dbReference>
<dbReference type="EMBL" id="Z48502">
    <property type="protein sequence ID" value="CAA88413.1"/>
    <property type="molecule type" value="Genomic_DNA"/>
</dbReference>
<dbReference type="EMBL" id="BK006946">
    <property type="protein sequence ID" value="DAA09946.1"/>
    <property type="molecule type" value="Genomic_DNA"/>
</dbReference>
<dbReference type="PIR" id="S28925">
    <property type="entry name" value="S28925"/>
</dbReference>
<dbReference type="RefSeq" id="NP_013762.1">
    <property type="nucleotide sequence ID" value="NM_001182544.1"/>
</dbReference>
<dbReference type="PDB" id="1O6P">
    <property type="method" value="X-ray"/>
    <property type="resolution" value="2.80 A"/>
    <property type="chains" value="C/D/E/F=602-609"/>
</dbReference>
<dbReference type="PDB" id="2AIV">
    <property type="method" value="NMR"/>
    <property type="chains" value="A=967-1113"/>
</dbReference>
<dbReference type="PDB" id="3PBP">
    <property type="method" value="X-ray"/>
    <property type="resolution" value="2.60 A"/>
    <property type="chains" value="B/E/H/K=967-1113"/>
</dbReference>
<dbReference type="PDBsum" id="1O6P"/>
<dbReference type="PDBsum" id="2AIV"/>
<dbReference type="PDBsum" id="3PBP"/>
<dbReference type="SMR" id="Q02630"/>
<dbReference type="BioGRID" id="35221">
    <property type="interactions" value="498"/>
</dbReference>
<dbReference type="ComplexPortal" id="CPX-824">
    <property type="entry name" value="Nuclear pore complex"/>
</dbReference>
<dbReference type="DIP" id="DIP-2389N"/>
<dbReference type="ELM" id="Q02630"/>
<dbReference type="FunCoup" id="Q02630">
    <property type="interactions" value="278"/>
</dbReference>
<dbReference type="IntAct" id="Q02630">
    <property type="interactions" value="41"/>
</dbReference>
<dbReference type="MINT" id="Q02630"/>
<dbReference type="STRING" id="4932.YMR047C"/>
<dbReference type="MEROPS" id="S59.951"/>
<dbReference type="TCDB" id="1.I.1.1.1">
    <property type="family name" value="the nuclear pore complex (npc) family"/>
</dbReference>
<dbReference type="GlyGen" id="Q02630">
    <property type="glycosylation" value="2 sites, 1 O-linked glycan (2 sites)"/>
</dbReference>
<dbReference type="iPTMnet" id="Q02630"/>
<dbReference type="PaxDb" id="4932-YMR047C"/>
<dbReference type="PeptideAtlas" id="Q02630"/>
<dbReference type="DNASU" id="855066"/>
<dbReference type="EnsemblFungi" id="YMR047C_mRNA">
    <property type="protein sequence ID" value="YMR047C"/>
    <property type="gene ID" value="YMR047C"/>
</dbReference>
<dbReference type="GeneID" id="855066"/>
<dbReference type="KEGG" id="sce:YMR047C"/>
<dbReference type="AGR" id="SGD:S000004650"/>
<dbReference type="SGD" id="S000004650">
    <property type="gene designation" value="NUP116"/>
</dbReference>
<dbReference type="VEuPathDB" id="FungiDB:YMR047C"/>
<dbReference type="eggNOG" id="KOG0845">
    <property type="taxonomic scope" value="Eukaryota"/>
</dbReference>
<dbReference type="GeneTree" id="ENSGT00550000074799"/>
<dbReference type="HOGENOM" id="CLU_011051_0_0_1"/>
<dbReference type="InParanoid" id="Q02630"/>
<dbReference type="OMA" id="DSATKHH"/>
<dbReference type="OrthoDB" id="3797628at2759"/>
<dbReference type="BioCyc" id="YEAST:G3O-32752-MONOMER"/>
<dbReference type="Reactome" id="R-SCE-159236">
    <property type="pathway name" value="Transport of Mature mRNA derived from an Intron-Containing Transcript"/>
</dbReference>
<dbReference type="Reactome" id="R-SCE-3371453">
    <property type="pathway name" value="Regulation of HSF1-mediated heat shock response"/>
</dbReference>
<dbReference type="Reactome" id="R-SCE-4085377">
    <property type="pathway name" value="SUMOylation of SUMOylation proteins"/>
</dbReference>
<dbReference type="Reactome" id="R-SCE-4551638">
    <property type="pathway name" value="SUMOylation of chromatin organization proteins"/>
</dbReference>
<dbReference type="Reactome" id="R-SCE-4570464">
    <property type="pathway name" value="SUMOylation of RNA binding proteins"/>
</dbReference>
<dbReference type="BioGRID-ORCS" id="855066">
    <property type="hits" value="8 hits in 10 CRISPR screens"/>
</dbReference>
<dbReference type="CD-CODE" id="691A1FB1">
    <property type="entry name" value="Nuclear pore complex"/>
</dbReference>
<dbReference type="EvolutionaryTrace" id="Q02630"/>
<dbReference type="PRO" id="PR:Q02630"/>
<dbReference type="Proteomes" id="UP000002311">
    <property type="component" value="Chromosome XIII"/>
</dbReference>
<dbReference type="RNAct" id="Q02630">
    <property type="molecule type" value="protein"/>
</dbReference>
<dbReference type="GO" id="GO:0005635">
    <property type="term" value="C:nuclear envelope"/>
    <property type="evidence" value="ECO:0000303"/>
    <property type="project" value="ComplexPortal"/>
</dbReference>
<dbReference type="GO" id="GO:0031965">
    <property type="term" value="C:nuclear membrane"/>
    <property type="evidence" value="ECO:0007669"/>
    <property type="project" value="UniProtKB-SubCell"/>
</dbReference>
<dbReference type="GO" id="GO:0005643">
    <property type="term" value="C:nuclear pore"/>
    <property type="evidence" value="ECO:0000314"/>
    <property type="project" value="SGD"/>
</dbReference>
<dbReference type="GO" id="GO:0044613">
    <property type="term" value="C:nuclear pore central transport channel"/>
    <property type="evidence" value="ECO:0000314"/>
    <property type="project" value="SGD"/>
</dbReference>
<dbReference type="GO" id="GO:0044614">
    <property type="term" value="C:nuclear pore cytoplasmic filaments"/>
    <property type="evidence" value="ECO:0000314"/>
    <property type="project" value="SGD"/>
</dbReference>
<dbReference type="GO" id="GO:0051117">
    <property type="term" value="F:ATPase binding"/>
    <property type="evidence" value="ECO:0000353"/>
    <property type="project" value="UniProtKB"/>
</dbReference>
<dbReference type="GO" id="GO:0042802">
    <property type="term" value="F:identical protein binding"/>
    <property type="evidence" value="ECO:0000353"/>
    <property type="project" value="IntAct"/>
</dbReference>
<dbReference type="GO" id="GO:0008139">
    <property type="term" value="F:nuclear localization sequence binding"/>
    <property type="evidence" value="ECO:0000318"/>
    <property type="project" value="GO_Central"/>
</dbReference>
<dbReference type="GO" id="GO:0003723">
    <property type="term" value="F:RNA binding"/>
    <property type="evidence" value="ECO:0000318"/>
    <property type="project" value="GO_Central"/>
</dbReference>
<dbReference type="GO" id="GO:0017056">
    <property type="term" value="F:structural constituent of nuclear pore"/>
    <property type="evidence" value="ECO:0000315"/>
    <property type="project" value="SGD"/>
</dbReference>
<dbReference type="GO" id="GO:0006406">
    <property type="term" value="P:mRNA export from nucleus"/>
    <property type="evidence" value="ECO:0000353"/>
    <property type="project" value="SGD"/>
</dbReference>
<dbReference type="GO" id="GO:0006999">
    <property type="term" value="P:nuclear pore organization"/>
    <property type="evidence" value="ECO:0000315"/>
    <property type="project" value="SGD"/>
</dbReference>
<dbReference type="GO" id="GO:0006913">
    <property type="term" value="P:nucleocytoplasmic transport"/>
    <property type="evidence" value="ECO:0000303"/>
    <property type="project" value="ComplexPortal"/>
</dbReference>
<dbReference type="GO" id="GO:0016973">
    <property type="term" value="P:poly(A)+ mRNA export from nucleus"/>
    <property type="evidence" value="ECO:0000315"/>
    <property type="project" value="SGD"/>
</dbReference>
<dbReference type="GO" id="GO:0000973">
    <property type="term" value="P:post-transcriptional tethering of RNA polymerase II gene DNA at nuclear periphery"/>
    <property type="evidence" value="ECO:0000318"/>
    <property type="project" value="GO_Central"/>
</dbReference>
<dbReference type="GO" id="GO:0006606">
    <property type="term" value="P:protein import into nucleus"/>
    <property type="evidence" value="ECO:0000315"/>
    <property type="project" value="SGD"/>
</dbReference>
<dbReference type="GO" id="GO:0000055">
    <property type="term" value="P:ribosomal large subunit export from nucleus"/>
    <property type="evidence" value="ECO:0000315"/>
    <property type="project" value="SGD"/>
</dbReference>
<dbReference type="GO" id="GO:0006405">
    <property type="term" value="P:RNA export from nucleus"/>
    <property type="evidence" value="ECO:0000318"/>
    <property type="project" value="GO_Central"/>
</dbReference>
<dbReference type="GO" id="GO:0034398">
    <property type="term" value="P:telomere tethering at nuclear periphery"/>
    <property type="evidence" value="ECO:0000318"/>
    <property type="project" value="GO_Central"/>
</dbReference>
<dbReference type="GO" id="GO:0006409">
    <property type="term" value="P:tRNA export from nucleus"/>
    <property type="evidence" value="ECO:0000315"/>
    <property type="project" value="SGD"/>
</dbReference>
<dbReference type="FunFam" id="1.10.10.2360:FF:000001">
    <property type="entry name" value="Nuclear pore complex protein Nup98-Nup96"/>
    <property type="match status" value="1"/>
</dbReference>
<dbReference type="FunFam" id="3.30.1610.10:FF:000003">
    <property type="entry name" value="Nucleoporin SONB, putative"/>
    <property type="match status" value="1"/>
</dbReference>
<dbReference type="Gene3D" id="1.10.10.2360">
    <property type="match status" value="1"/>
</dbReference>
<dbReference type="Gene3D" id="3.30.1610.10">
    <property type="entry name" value="Peptidase S59, nucleoporin"/>
    <property type="match status" value="1"/>
</dbReference>
<dbReference type="InterPro" id="IPR025574">
    <property type="entry name" value="Nucleoporin_FG_rpt"/>
</dbReference>
<dbReference type="InterPro" id="IPR037665">
    <property type="entry name" value="Nucleoporin_S59-like"/>
</dbReference>
<dbReference type="InterPro" id="IPR007230">
    <property type="entry name" value="Nup98_auto-Pept-S59_dom"/>
</dbReference>
<dbReference type="InterPro" id="IPR036903">
    <property type="entry name" value="Nup98_auto-Pept-S59_dom_sf"/>
</dbReference>
<dbReference type="PANTHER" id="PTHR23198">
    <property type="entry name" value="NUCLEOPORIN"/>
    <property type="match status" value="1"/>
</dbReference>
<dbReference type="PANTHER" id="PTHR23198:SF30">
    <property type="entry name" value="NUCLEOPORIN NUP100_NSP100-RELATED"/>
    <property type="match status" value="1"/>
</dbReference>
<dbReference type="Pfam" id="PF04096">
    <property type="entry name" value="Nucleoporin2"/>
    <property type="match status" value="1"/>
</dbReference>
<dbReference type="Pfam" id="PF13634">
    <property type="entry name" value="Nucleoporin_FG"/>
    <property type="match status" value="6"/>
</dbReference>
<dbReference type="SUPFAM" id="SSF82215">
    <property type="entry name" value="C-terminal autoproteolytic domain of nucleoporin nup98"/>
    <property type="match status" value="1"/>
</dbReference>
<dbReference type="PROSITE" id="PS51434">
    <property type="entry name" value="NUP_C"/>
    <property type="match status" value="1"/>
</dbReference>
<name>NU116_YEAST</name>
<sequence>MFGVSRGAFPSATTQPFGSTGSTFGGQQQQQQPVANTSAFGLSQQTNTTQAPAFGNFGNQTSNSPFGMSGSTTANGTPFGQSQLTNNNASGSIFGGMGNNTALSAGSASVVPNSTAGTSIKPFTTFEEKDPTTGVINVFQSITCMPEYRNFSFEELRFQDYQAGRKFGTSQNGTGTTFNNPQGTTNTGFGIMGNNNSTTSATTGGLFGQKPATGMFGTGTGSGGGFGSGATNSTGLFGSSTNLSGNSAFGANKPATSGGLFGNTTNNPTNGTNNTGLFGQQNSNTNGGLFGQQQNSFGANNVSNGGAFGQVNRGAFPQQQTQQGSGGIFGQSNANANGGAFGQQQGTGALFGAKPASGGLFGQSAGSKAFGMNTNPTGTTGGLFGQTNQQQSGGGLFGQQQNSNAGGLFGQNNQSQNQSGLFGQQNSSNAFGQPQQQGGLFGSKPAGGLFGQQQGASTFASGNAQNNSIFGQNNQQQQSTGGLFGQQNNQSQSQPGGLFGQTNQNNNQPFGQNGLQQPQQNNSLFGAKPTGFGNTSLFSNSTTNQSNGISGNNLQQQSGGLFQNKQQPASGGLFGSKPSNTVGGGLFGNNQVANQNNPASTSGGLFGSKPATGSLFGGTNSTAPNASSGGIFGSNNASNTAATTNSTGLFGNKPVGAGASTSAGGLFGNNNNSSLNNSNGSTGLFGSNNTSQSTNAGGLFQNNTSTNTSGGGLFSQPSQSMAQSQNALQQQQQQQRLQIQNNNPYGTNELFSKATVTNTVSYPIQPSATKIKADERKKASLTNAYKMIPKTLFTAKLKTNNSVMDKAQIKVDPKLSISIDKKNNQIAISNQQEENLDESILKASELLFNPDKRSFKNLINNRKMLIASEEKNNGSQNNDMNFKSKSEEQETILGKPKMDEKETANGGERMVLSSKNDGEDSATKHHSRNMDEENKENVADLQKQEYSEDDKKAVFADVAEKDASFINENYYISPSLDTLSSYSLLQLRKVPHLVVGHKSYGKIEFLEPVDLAGIPLTSLGGVIITFEPKTCIIYANLPNRPKRGEGINVRARITCFNCYPVDKSTRKPIKDPNHQLVKRHIERLKKNPNSKFESYDADSGTYVFIVNHAAEQT</sequence>
<protein>
    <recommendedName>
        <fullName>Nucleoporin NUP116/NSP116</fullName>
    </recommendedName>
    <alternativeName>
        <fullName>Nuclear pore protein NUP116/NSP116</fullName>
    </alternativeName>
</protein>
<keyword id="KW-0002">3D-structure</keyword>
<keyword id="KW-0472">Membrane</keyword>
<keyword id="KW-0509">mRNA transport</keyword>
<keyword id="KW-0906">Nuclear pore complex</keyword>
<keyword id="KW-0539">Nucleus</keyword>
<keyword id="KW-0597">Phosphoprotein</keyword>
<keyword id="KW-0653">Protein transport</keyword>
<keyword id="KW-1185">Reference proteome</keyword>
<keyword id="KW-0677">Repeat</keyword>
<keyword id="KW-0811">Translocation</keyword>
<keyword id="KW-0813">Transport</keyword>
<comment type="function">
    <text evidence="3 4 5 6 7 8 9 10 11 12 14 15 16 17 18">Functions as a component of the nuclear pore complex (NPC). NPC components, collectively referred to as nucleoporins (NUPs), can play the role of both NPC structural components and of docking or interaction partners for transiently associated nuclear transport factors. Active directional transport is assured by both, a Phe-Gly (FG) repeat affinity gradient for these transport factors across the NPC and a transport cofactor concentration gradient across the nuclear envelope (GSP1 and GSP2 GTPases associated predominantly with GTP in the nucleus, with GDP in the cytoplasm). Plays an important role in several nuclear export and import pathways including poly(A)+ RNA, tRNA, pre-ribosome, and protein transport. By binding ATPase AFG2, promotes AFG2-mediated release of shuttling protein RLP24 from pre-60S ribosomal particles (PubMed:23185031).</text>
</comment>
<comment type="subunit">
    <text evidence="3 4 5 7 10 13 14 17 18">Component of the nuclear pore complex (NPC). NPC constitutes the exclusive means of nucleocytoplasmic transport (PubMed:10891509). NPCs allow the passive diffusion of ions and small molecules and the active, nuclear transport receptor-mediated bidirectional transport of macromolecules such as proteins, RNAs, ribonucleoparticles (RNPs), and ribosomal subunits across the nuclear envelope. Due to its 8-fold rotational symmetry, all subunits are present with 8 copies or multiples thereof (PubMed:10891509). NUP116 interacts with the NUP82 subcomplex and GLE2 (PubMed:10801828, PubMed:10891509, PubMed:9463388). Through its FG repeats it interacts with numerous karyopherins including KAP95, PSE1 (GSP1-GDP dependent), MEX67, and to homomeric RNA (PubMed:10952996, PubMed:11104765, PubMed:12372823, PubMed:9891088). Interacts with CEX1 (PubMed:17203074). Interacts (via N-terminus) with AFG2 (via N-terminus) (PubMed:23185031).</text>
</comment>
<comment type="interaction">
    <interactant intactId="EBI-11703">
        <id>Q02630</id>
    </interactant>
    <interactant intactId="EBI-31271">
        <id>Q12453</id>
        <label>CEX1</label>
    </interactant>
    <organismsDiffer>false</organismsDiffer>
    <experiments>4</experiments>
</comment>
<comment type="interaction">
    <interactant intactId="EBI-11703">
        <id>Q02630</id>
    </interactant>
    <interactant intactId="EBI-22648">
        <id>P40066</id>
        <label>GLE2</label>
    </interactant>
    <organismsDiffer>false</organismsDiffer>
    <experiments>6</experiments>
</comment>
<comment type="interaction">
    <interactant intactId="EBI-11703">
        <id>Q02630</id>
    </interactant>
    <interactant intactId="EBI-9145">
        <id>Q06142</id>
        <label>KAP95</label>
    </interactant>
    <organismsDiffer>false</organismsDiffer>
    <experiments>4</experiments>
</comment>
<comment type="interaction">
    <interactant intactId="EBI-11703">
        <id>Q02630</id>
    </interactant>
    <interactant intactId="EBI-11642">
        <id>Q99257</id>
        <label>MEX67</label>
    </interactant>
    <organismsDiffer>false</organismsDiffer>
    <experiments>5</experiments>
</comment>
<comment type="interaction">
    <interactant intactId="EBI-11703">
        <id>Q02630</id>
    </interactant>
    <interactant intactId="EBI-11698">
        <id>Q02629</id>
        <label>NUP100</label>
    </interactant>
    <organismsDiffer>false</organismsDiffer>
    <experiments>4</experiments>
</comment>
<comment type="interaction">
    <interactant intactId="EBI-11703">
        <id>Q02630</id>
    </interactant>
    <interactant intactId="EBI-11703">
        <id>Q02630</id>
        <label>NUP116</label>
    </interactant>
    <organismsDiffer>false</organismsDiffer>
    <experiments>2</experiments>
</comment>
<comment type="interaction">
    <interactant intactId="EBI-11703">
        <id>Q02630</id>
    </interactant>
    <interactant intactId="EBI-25846">
        <id>P47054</id>
        <label>NUP192</label>
    </interactant>
    <organismsDiffer>false</organismsDiffer>
    <experiments>2</experiments>
</comment>
<comment type="interaction">
    <interactant intactId="EBI-11703">
        <id>Q02630</id>
    </interactant>
    <interactant intactId="EBI-12310">
        <id>P49686</id>
        <label>NUP42</label>
    </interactant>
    <organismsDiffer>false</organismsDiffer>
    <experiments>2</experiments>
</comment>
<comment type="interaction">
    <interactant intactId="EBI-11703">
        <id>Q02630</id>
    </interactant>
    <interactant intactId="EBI-12324">
        <id>P48837</id>
        <label>NUP57</label>
    </interactant>
    <organismsDiffer>false</organismsDiffer>
    <experiments>4</experiments>
</comment>
<comment type="interaction">
    <interactant intactId="EBI-11703">
        <id>Q02630</id>
    </interactant>
    <interactant intactId="EBI-12331">
        <id>P40368</id>
        <label>NUP82</label>
    </interactant>
    <organismsDiffer>false</organismsDiffer>
    <experiments>3</experiments>
</comment>
<comment type="interaction">
    <interactant intactId="EBI-11703">
        <id>Q02630</id>
    </interactant>
    <interactant intactId="EBI-12345">
        <id>P46673</id>
        <label>NUP85</label>
    </interactant>
    <organismsDiffer>false</organismsDiffer>
    <experiments>3</experiments>
</comment>
<comment type="subcellular location">
    <subcellularLocation>
        <location evidence="4">Nucleus</location>
        <location evidence="4">Nuclear pore complex</location>
    </subcellularLocation>
    <subcellularLocation>
        <location>Nucleus membrane</location>
        <topology>Peripheral membrane protein</topology>
        <orientation>Cytoplasmic side</orientation>
    </subcellularLocation>
    <subcellularLocation>
        <location>Nucleus membrane</location>
        <topology>Peripheral membrane protein</topology>
        <orientation>Nucleoplasmic side</orientation>
    </subcellularLocation>
    <text>Biased towards cytoplasmic side.</text>
</comment>
<comment type="domain">
    <text>Contains FG repeats. FG repeats are interaction sites for karyopherins (importins, exportins) and form probably an affinity gradient, guiding the transport proteins unidirectionally with their cargo through the NPC. FG repeat regions are highly flexible and lack ordered secondary structure. The overall conservation of FG repeats regarding exact sequence, spacing, and repeat unit length is limited. FG repeat types and their physico-chemical environment change across the NPC from the nucleoplasmic to the cytoplasmic side: GLFG repeats are especially abundant in NUPs in the central region (lacking a charged environment but are enriched in Ser, Thr, Gln, and Asn).</text>
</comment>
<comment type="similarity">
    <text evidence="19">Belongs to the nucleoporin GLFG family.</text>
</comment>
<organism>
    <name type="scientific">Saccharomyces cerevisiae (strain ATCC 204508 / S288c)</name>
    <name type="common">Baker's yeast</name>
    <dbReference type="NCBI Taxonomy" id="559292"/>
    <lineage>
        <taxon>Eukaryota</taxon>
        <taxon>Fungi</taxon>
        <taxon>Dikarya</taxon>
        <taxon>Ascomycota</taxon>
        <taxon>Saccharomycotina</taxon>
        <taxon>Saccharomycetes</taxon>
        <taxon>Saccharomycetales</taxon>
        <taxon>Saccharomycetaceae</taxon>
        <taxon>Saccharomyces</taxon>
    </lineage>
</organism>
<accession>Q02630</accession>
<accession>D6VZM2</accession>
<reference key="1">
    <citation type="journal article" date="1992" name="J. Cell Biol.">
        <title>A new family of yeast nuclear pore complex proteins.</title>
        <authorList>
            <person name="Wente S.R."/>
            <person name="Rout M.P."/>
            <person name="Blobel G."/>
        </authorList>
    </citation>
    <scope>NUCLEOTIDE SEQUENCE [GENOMIC DNA]</scope>
</reference>
<reference key="2">
    <citation type="journal article" date="1992" name="EMBO J.">
        <title>A new subclass of nucleoporins that functionally interact with nuclear pore protein NSP1.</title>
        <authorList>
            <person name="Wimmer C."/>
            <person name="Doye V."/>
            <person name="Grandi P."/>
            <person name="Nehrbass U."/>
            <person name="Hurt E.C."/>
        </authorList>
    </citation>
    <scope>NUCLEOTIDE SEQUENCE [GENOMIC DNA]</scope>
</reference>
<reference key="3">
    <citation type="journal article" date="1997" name="Nature">
        <title>The nucleotide sequence of Saccharomyces cerevisiae chromosome XIII.</title>
        <authorList>
            <person name="Bowman S."/>
            <person name="Churcher C.M."/>
            <person name="Badcock K."/>
            <person name="Brown D."/>
            <person name="Chillingworth T."/>
            <person name="Connor R."/>
            <person name="Dedman K."/>
            <person name="Devlin K."/>
            <person name="Gentles S."/>
            <person name="Hamlin N."/>
            <person name="Hunt S."/>
            <person name="Jagels K."/>
            <person name="Lye G."/>
            <person name="Moule S."/>
            <person name="Odell C."/>
            <person name="Pearson D."/>
            <person name="Rajandream M.A."/>
            <person name="Rice P."/>
            <person name="Skelton J."/>
            <person name="Walsh S.V."/>
            <person name="Whitehead S."/>
            <person name="Barrell B.G."/>
        </authorList>
    </citation>
    <scope>NUCLEOTIDE SEQUENCE [LARGE SCALE GENOMIC DNA]</scope>
    <source>
        <strain>ATCC 204508 / S288c</strain>
    </source>
</reference>
<reference key="4">
    <citation type="journal article" date="2014" name="G3 (Bethesda)">
        <title>The reference genome sequence of Saccharomyces cerevisiae: Then and now.</title>
        <authorList>
            <person name="Engel S.R."/>
            <person name="Dietrich F.S."/>
            <person name="Fisk D.G."/>
            <person name="Binkley G."/>
            <person name="Balakrishnan R."/>
            <person name="Costanzo M.C."/>
            <person name="Dwight S.S."/>
            <person name="Hitz B.C."/>
            <person name="Karra K."/>
            <person name="Nash R.S."/>
            <person name="Weng S."/>
            <person name="Wong E.D."/>
            <person name="Lloyd P."/>
            <person name="Skrzypek M.S."/>
            <person name="Miyasato S.R."/>
            <person name="Simison M."/>
            <person name="Cherry J.M."/>
        </authorList>
    </citation>
    <scope>GENOME REANNOTATION</scope>
    <source>
        <strain>ATCC 204508 / S288c</strain>
    </source>
</reference>
<reference key="5">
    <citation type="journal article" date="1994" name="Cell">
        <title>Nup145p is required for nuclear export of mRNA and binds homopolymeric RNA in vitro via a novel conserved motif.</title>
        <authorList>
            <person name="Fabre E."/>
            <person name="Boelens W.C."/>
            <person name="Wimmer C."/>
            <person name="Mattaj I.W."/>
            <person name="Hurt E.C."/>
        </authorList>
    </citation>
    <scope>FUNCTION</scope>
    <scope>HOMOPOLYMERIC RNA-BINDING</scope>
</reference>
<reference key="6">
    <citation type="journal article" date="1996" name="Mol. Cell. Biol.">
        <title>Yeast nucleoporin mutants are defective in pre-tRNA splicing.</title>
        <authorList>
            <person name="Sharma K."/>
            <person name="Fabre E."/>
            <person name="Tekotte H."/>
            <person name="Hurt E.C."/>
            <person name="Tollervey D."/>
        </authorList>
    </citation>
    <scope>FUNCTION IN TRNA EXPORT</scope>
</reference>
<reference key="7">
    <citation type="journal article" date="1998" name="EMBO J.">
        <title>Nup116p and nup100p are interchangeable through a conserved motif which constitutes a docking site for the mRNA transport factor gle2p.</title>
        <authorList>
            <person name="Bailer S.M."/>
            <person name="Siniossoglou S."/>
            <person name="Podtelejnikov A."/>
            <person name="Hellwig A."/>
            <person name="Mann M."/>
            <person name="Hurt E.C."/>
        </authorList>
    </citation>
    <scope>FUNCTION</scope>
    <scope>INTERACTION WITH GLE2</scope>
</reference>
<reference key="8">
    <citation type="journal article" date="1999" name="Mol. Cell. Biol.">
        <title>Interactions between a nuclear transporter and a subset of nuclear pore complex proteins depend on Ran GTPase.</title>
        <authorList>
            <person name="Seedorf M."/>
            <person name="Damelin M."/>
            <person name="Kahana J."/>
            <person name="Taura T."/>
            <person name="Silver P.A."/>
        </authorList>
    </citation>
    <scope>FUNCTION</scope>
    <scope>INTERACTION WITH PSE1</scope>
</reference>
<reference key="9">
    <citation type="journal article" date="2000" name="Mol. Cell. Biol.">
        <title>Assembly and preferential localization of Nup116p on the cytoplasmic face of the nuclear pore complex by interaction with Nup82p.</title>
        <authorList>
            <person name="Ho A.K."/>
            <person name="Shen T.X."/>
            <person name="Ryan K.J."/>
            <person name="Kiseleva E."/>
            <person name="Levy M.A."/>
            <person name="Allen T.D."/>
            <person name="Wente S.R."/>
        </authorList>
    </citation>
    <scope>FUNCTION</scope>
    <scope>IDENTIFICATION IN THE NUCLEAR PORE COMPLEX</scope>
    <scope>INTERACTION WITH NUP82</scope>
</reference>
<reference key="10">
    <citation type="journal article" date="2000" name="J. Cell Biol.">
        <title>Binding of the Mex67p/Mtr2p heterodimer to FXFG, GLFG, and FG repeat nucleoporins is essential for nuclear mRNA export.</title>
        <authorList>
            <person name="Straesser K."/>
            <person name="Bassler J."/>
            <person name="Hurt E.C."/>
        </authorList>
    </citation>
    <scope>FUNCTION</scope>
    <scope>INTERACTION WITH MEX67/MTR2 HETERODIMER</scope>
</reference>
<reference key="11">
    <citation type="journal article" date="2000" name="Mol. Biol. Cell">
        <title>Factors affecting nuclear export of the 60S ribosomal subunit in vivo.</title>
        <authorList>
            <person name="Stage-Zimmermann T."/>
            <person name="Schmidt U."/>
            <person name="Silver P.A."/>
        </authorList>
    </citation>
    <scope>FUNCTION</scope>
    <scope>PRE-RIBOSOME EXPORT</scope>
</reference>
<reference key="12">
    <citation type="journal article" date="2000" name="J. Biol. Chem.">
        <title>Nup116p associates with the Nup82p-Nsp1p-Nup159p nucleoporin complex.</title>
        <authorList>
            <person name="Bailer S.M."/>
            <person name="Balduf C."/>
            <person name="Katahira J."/>
            <person name="Podtelejnikov A."/>
            <person name="Rollenhagen C."/>
            <person name="Mann M."/>
            <person name="Pante N."/>
            <person name="Hurt E.C."/>
        </authorList>
    </citation>
    <scope>FUNCTION</scope>
    <scope>INTERACTION WITH NUP82 NPC SUBCOMPLEX</scope>
</reference>
<reference key="13">
    <citation type="journal article" date="2000" name="J. Cell Biol.">
        <title>The yeast nuclear pore complex: composition, architecture, and transport mechanism.</title>
        <authorList>
            <person name="Rout M.P."/>
            <person name="Aitchison J.D."/>
            <person name="Suprapto A."/>
            <person name="Hjertaas K."/>
            <person name="Zhao Y."/>
            <person name="Chait B.T."/>
        </authorList>
    </citation>
    <scope>CHARACTERIZATION</scope>
    <scope>NPC SUBUNIT LOCATION</scope>
</reference>
<reference key="14">
    <citation type="journal article" date="2001" name="J. Biol. Chem.">
        <title>Proteomic analysis of nucleoporin interacting proteins.</title>
        <authorList>
            <person name="Allen N.P."/>
            <person name="Huang L."/>
            <person name="Burlingame A."/>
            <person name="Rexach M."/>
        </authorList>
    </citation>
    <scope>FUNCTION</scope>
    <scope>NUCLEOPORIN INTERACTING PROTEINS</scope>
</reference>
<reference key="15">
    <citation type="journal article" date="2001" name="Mol. Cell. Biol.">
        <title>The Nsp1p carboxy-terminal domain is organized into functionally distinct coiled-coil regions required for assembly of nucleoporin subcomplexes and nucleocytoplasmic transport.</title>
        <authorList>
            <person name="Bailer S.M."/>
            <person name="Balduf C."/>
            <person name="Hurt E.C."/>
        </authorList>
    </citation>
    <scope>FUNCTION</scope>
    <scope>NPC ASSEMBLY</scope>
</reference>
<reference key="16">
    <citation type="journal article" date="2001" name="J. Biol. Chem.">
        <title>The GLFG regions of Nup116p and Nup100p serve as binding sites for both Kap95p and Mex67p at the nuclear pore complex.</title>
        <authorList>
            <person name="Strawn L.A."/>
            <person name="Shen T.X."/>
            <person name="Wente S.R."/>
        </authorList>
    </citation>
    <scope>FUNCTION</scope>
    <scope>INTERACTION WITH MEX67 AND KAP95</scope>
</reference>
<reference key="17">
    <citation type="journal article" date="2002" name="J. Biol. Chem.">
        <title>GLFG and FxFG nucleoporins bind to overlapping sites on importin-beta.</title>
        <authorList>
            <person name="Bayliss R."/>
            <person name="Littlewood T."/>
            <person name="Strawn L.A."/>
            <person name="Wente S.R."/>
            <person name="Stewart M."/>
        </authorList>
    </citation>
    <scope>FUNCTION</scope>
    <scope>STRUCTURAL BASIS OF FG REPEAT INTERACTION</scope>
    <scope>INTERACTION WITH KAP95</scope>
</reference>
<reference key="18">
    <citation type="journal article" date="2003" name="Proc. Natl. Acad. Sci. U.S.A.">
        <title>Disorder in the nuclear pore complex: the FG repeat regions of nucleoporins are natively unfolded.</title>
        <authorList>
            <person name="Denning D.P."/>
            <person name="Patel S.S."/>
            <person name="Uversky V."/>
            <person name="Fink A.L."/>
            <person name="Rexach M."/>
        </authorList>
    </citation>
    <scope>FUNCTION</scope>
    <scope>FG REPEAT STRUCTURE</scope>
</reference>
<reference key="19">
    <citation type="journal article" date="2004" name="Nat. Cell Biol.">
        <title>Minimal nuclear pore complexes define FG repeat domains essential for transport.</title>
        <authorList>
            <person name="Strawn L.A."/>
            <person name="Shen T.X."/>
            <person name="Shulga N."/>
            <person name="Goldfarb D.S."/>
            <person name="Wente S.R."/>
        </authorList>
    </citation>
    <scope>FUNCTION</scope>
    <scope>FG REPEATS IN NPC TRANSPORT</scope>
</reference>
<reference key="20">
    <citation type="journal article" date="2003" name="Dev. Cell">
        <title>Peering through the pore: nuclear pore complex structure, assembly, and function.</title>
        <authorList>
            <person name="Suntharalingam M."/>
            <person name="Wente S.R."/>
        </authorList>
    </citation>
    <scope>REVIEW</scope>
</reference>
<reference key="21">
    <citation type="journal article" date="2007" name="EMBO J.">
        <title>Cex1p is a novel cytoplasmic component of the Saccharomyces cerevisiae nuclear tRNA export machinery.</title>
        <authorList>
            <person name="McGuire A.T."/>
            <person name="Mangroo D."/>
        </authorList>
    </citation>
    <scope>INTERACTION WITH CEX1</scope>
</reference>
<reference key="22">
    <citation type="journal article" date="2009" name="Science">
        <title>Global analysis of Cdk1 substrate phosphorylation sites provides insights into evolution.</title>
        <authorList>
            <person name="Holt L.J."/>
            <person name="Tuch B.B."/>
            <person name="Villen J."/>
            <person name="Johnson A.D."/>
            <person name="Gygi S.P."/>
            <person name="Morgan D.O."/>
        </authorList>
    </citation>
    <scope>PHOSPHORYLATION [LARGE SCALE ANALYSIS] AT SER-886</scope>
    <scope>IDENTIFICATION BY MASS SPECTROMETRY [LARGE SCALE ANALYSIS]</scope>
</reference>
<reference key="23">
    <citation type="journal article" date="2012" name="J. Cell Biol.">
        <title>Rlp24 activates the AAA-ATPase Drg1 to initiate cytoplasmic pre-60S maturation.</title>
        <authorList>
            <person name="Kappel L."/>
            <person name="Loibl M."/>
            <person name="Zisser G."/>
            <person name="Klein I."/>
            <person name="Fruhmann G."/>
            <person name="Gruber C."/>
            <person name="Unterweger S."/>
            <person name="Rechberger G."/>
            <person name="Pertschy B."/>
            <person name="Bergler H."/>
        </authorList>
    </citation>
    <scope>FUNCTION</scope>
    <scope>INTERACTION WITH AFG2</scope>
    <scope>MUTAGENESIS OF 92-SER--THR-1113; 110-VAL--LYS-166 AND 173-GLY--THR-1113</scope>
</reference>
<proteinExistence type="evidence at protein level"/>